<dbReference type="EMBL" id="AL844502">
    <property type="protein sequence ID" value="CAB39015.1"/>
    <property type="molecule type" value="Genomic_DNA"/>
</dbReference>
<dbReference type="RefSeq" id="XP_001351146.1">
    <property type="nucleotide sequence ID" value="XM_001351110.1"/>
</dbReference>
<dbReference type="PDB" id="3J7A">
    <property type="method" value="EM"/>
    <property type="resolution" value="3.20 A"/>
    <property type="chains" value="R=1-141"/>
</dbReference>
<dbReference type="PDB" id="3JBN">
    <property type="method" value="EM"/>
    <property type="resolution" value="4.70 A"/>
    <property type="chains" value="R=22-135"/>
</dbReference>
<dbReference type="PDB" id="3JBO">
    <property type="method" value="EM"/>
    <property type="resolution" value="5.80 A"/>
    <property type="chains" value="R=22-135"/>
</dbReference>
<dbReference type="PDB" id="3JBP">
    <property type="method" value="EM"/>
    <property type="resolution" value="6.70 A"/>
    <property type="chains" value="R=22-135"/>
</dbReference>
<dbReference type="PDB" id="6OKK">
    <property type="method" value="EM"/>
    <property type="resolution" value="3.30 A"/>
    <property type="chains" value="R=1-141"/>
</dbReference>
<dbReference type="PDB" id="8TPU">
    <property type="method" value="EM"/>
    <property type="resolution" value="4.10 A"/>
    <property type="chains" value="SR=1-141"/>
</dbReference>
<dbReference type="PDBsum" id="3J7A"/>
<dbReference type="PDBsum" id="3JBN"/>
<dbReference type="PDBsum" id="3JBO"/>
<dbReference type="PDBsum" id="3JBP"/>
<dbReference type="PDBsum" id="6OKK"/>
<dbReference type="PDBsum" id="8TPU"/>
<dbReference type="EMDB" id="EMD-41485"/>
<dbReference type="SMR" id="O97249"/>
<dbReference type="FunCoup" id="O97249">
    <property type="interactions" value="438"/>
</dbReference>
<dbReference type="IntAct" id="O97249">
    <property type="interactions" value="1"/>
</dbReference>
<dbReference type="STRING" id="36329.O97249"/>
<dbReference type="PaxDb" id="5833-PFC0295c"/>
<dbReference type="EnsemblProtists" id="CAB39015">
    <property type="protein sequence ID" value="CAB39015"/>
    <property type="gene ID" value="PF3D7_0307100"/>
</dbReference>
<dbReference type="GeneID" id="814388"/>
<dbReference type="KEGG" id="pfa:PF3D7_0307100"/>
<dbReference type="VEuPathDB" id="PlasmoDB:PF3D7_0307100"/>
<dbReference type="HOGENOM" id="CLU_110343_1_0_1"/>
<dbReference type="InParanoid" id="O97249"/>
<dbReference type="OMA" id="CAEHQIP"/>
<dbReference type="OrthoDB" id="10249311at2759"/>
<dbReference type="PhylomeDB" id="O97249"/>
<dbReference type="Reactome" id="R-PFA-156827">
    <property type="pathway name" value="L13a-mediated translational silencing of Ceruloplasmin expression"/>
</dbReference>
<dbReference type="Reactome" id="R-PFA-1799339">
    <property type="pathway name" value="SRP-dependent cotranslational protein targeting to membrane"/>
</dbReference>
<dbReference type="Reactome" id="R-PFA-72649">
    <property type="pathway name" value="Translation initiation complex formation"/>
</dbReference>
<dbReference type="Reactome" id="R-PFA-72689">
    <property type="pathway name" value="Formation of a pool of free 40S subunits"/>
</dbReference>
<dbReference type="Reactome" id="R-PFA-72695">
    <property type="pathway name" value="Formation of the ternary complex, and subsequently, the 43S complex"/>
</dbReference>
<dbReference type="Reactome" id="R-PFA-72702">
    <property type="pathway name" value="Ribosomal scanning and start codon recognition"/>
</dbReference>
<dbReference type="Reactome" id="R-PFA-72706">
    <property type="pathway name" value="GTP hydrolysis and joining of the 60S ribosomal subunit"/>
</dbReference>
<dbReference type="Reactome" id="R-PFA-975956">
    <property type="pathway name" value="Nonsense Mediated Decay (NMD) independent of the Exon Junction Complex (EJC)"/>
</dbReference>
<dbReference type="Reactome" id="R-PFA-975957">
    <property type="pathway name" value="Nonsense Mediated Decay (NMD) enhanced by the Exon Junction Complex (EJC)"/>
</dbReference>
<dbReference type="EvolutionaryTrace" id="O97249"/>
<dbReference type="Proteomes" id="UP000001450">
    <property type="component" value="Chromosome 3"/>
</dbReference>
<dbReference type="GO" id="GO:0022627">
    <property type="term" value="C:cytosolic small ribosomal subunit"/>
    <property type="evidence" value="ECO:0000250"/>
    <property type="project" value="GeneDB"/>
</dbReference>
<dbReference type="GO" id="GO:0003735">
    <property type="term" value="F:structural constituent of ribosome"/>
    <property type="evidence" value="ECO:0000250"/>
    <property type="project" value="GeneDB"/>
</dbReference>
<dbReference type="GO" id="GO:1990145">
    <property type="term" value="P:maintenance of translational fidelity"/>
    <property type="evidence" value="ECO:0000318"/>
    <property type="project" value="GO_Central"/>
</dbReference>
<dbReference type="GO" id="GO:0042274">
    <property type="term" value="P:ribosomal small subunit biogenesis"/>
    <property type="evidence" value="ECO:0000318"/>
    <property type="project" value="GO_Central"/>
</dbReference>
<dbReference type="GO" id="GO:0006412">
    <property type="term" value="P:translation"/>
    <property type="evidence" value="ECO:0000250"/>
    <property type="project" value="GeneDB"/>
</dbReference>
<dbReference type="FunFam" id="3.30.1330.30:FF:000037">
    <property type="entry name" value="40S ribosomal protein S12"/>
    <property type="match status" value="1"/>
</dbReference>
<dbReference type="Gene3D" id="3.30.1330.30">
    <property type="match status" value="1"/>
</dbReference>
<dbReference type="InterPro" id="IPR029064">
    <property type="entry name" value="Ribosomal_eL30-like_sf"/>
</dbReference>
<dbReference type="InterPro" id="IPR004038">
    <property type="entry name" value="Ribosomal_eL8/eL30/eS12/Gad45"/>
</dbReference>
<dbReference type="InterPro" id="IPR000530">
    <property type="entry name" value="Ribosomal_eS12"/>
</dbReference>
<dbReference type="InterPro" id="IPR047860">
    <property type="entry name" value="Ribosomal_eS12_CS"/>
</dbReference>
<dbReference type="PANTHER" id="PTHR11843">
    <property type="entry name" value="40S RIBOSOMAL PROTEIN S12"/>
    <property type="match status" value="1"/>
</dbReference>
<dbReference type="Pfam" id="PF01248">
    <property type="entry name" value="Ribosomal_L7Ae"/>
    <property type="match status" value="1"/>
</dbReference>
<dbReference type="PRINTS" id="PR00972">
    <property type="entry name" value="RIBSOMALS12E"/>
</dbReference>
<dbReference type="SUPFAM" id="SSF55315">
    <property type="entry name" value="L30e-like"/>
    <property type="match status" value="1"/>
</dbReference>
<dbReference type="PROSITE" id="PS01189">
    <property type="entry name" value="RIBOSOMAL_S12E"/>
    <property type="match status" value="1"/>
</dbReference>
<comment type="function">
    <text evidence="5 6">Component of the ribosome, a large ribonucleoprotein complex responsible for the synthesis of proteins in the cell (Probable). The small ribosomal subunit (SSU) binds messenger RNAs (mRNAs) and translates the encoded message by selecting cognate aminoacyl-transfer RNA (tRNA) molecules (Probable). The large subunit (LSU) contains the ribosomal catalytic site termed the peptidyl transferase center (PTC), which catalyzes the formation of peptide bonds, thereby polymerizing the amino acids delivered by tRNAs into a polypeptide chain (Probable). The nascent polypeptides leave the ribosome through a tunnel in the LSU and interact with protein factors that function in enzymatic processing, targeting, and the membrane insertion of nascent chains at the exit of the ribosomal tunnel (Probable).</text>
</comment>
<comment type="subunit">
    <text evidence="1 2">Component of the small ribosomal subunit (PubMed:24913268, PubMed:26432834). Mature ribosomes consist of a small (40S) and a large (60S) subunit (PubMed:24913268, PubMed:26432834). The 40S subunit contains about 32 different proteins and 1 molecule of RNA (18S). The 60S subunit contains about 42 different proteins and 3 molecules of RNA (28S, 5.8S and 5S) (PubMed:24913268, PubMed:26432834).</text>
</comment>
<comment type="subcellular location">
    <subcellularLocation>
        <location evidence="1">Cytoplasm</location>
    </subcellularLocation>
</comment>
<comment type="developmental stage">
    <text evidence="1 2">Expressed during the asexual blood stage (at protein level).</text>
</comment>
<comment type="similarity">
    <text evidence="4">Belongs to the eukaryotic ribosomal protein eS12 family.</text>
</comment>
<feature type="chain" id="PRO_0000122331" description="Small ribosomal subunit protein eS12">
    <location>
        <begin position="1"/>
        <end position="141"/>
    </location>
</feature>
<feature type="helix" evidence="12">
    <location>
        <begin position="23"/>
        <end position="35"/>
    </location>
</feature>
<feature type="strand" evidence="12">
    <location>
        <begin position="38"/>
        <end position="41"/>
    </location>
</feature>
<feature type="helix" evidence="12">
    <location>
        <begin position="43"/>
        <end position="49"/>
    </location>
</feature>
<feature type="turn" evidence="12">
    <location>
        <begin position="50"/>
        <end position="52"/>
    </location>
</feature>
<feature type="strand" evidence="12">
    <location>
        <begin position="56"/>
        <end position="58"/>
    </location>
</feature>
<feature type="helix" evidence="12">
    <location>
        <begin position="67"/>
        <end position="77"/>
    </location>
</feature>
<feature type="helix" evidence="12">
    <location>
        <begin position="91"/>
        <end position="96"/>
    </location>
</feature>
<feature type="strand" evidence="12">
    <location>
        <begin position="117"/>
        <end position="119"/>
    </location>
</feature>
<feature type="helix" evidence="12">
    <location>
        <begin position="129"/>
        <end position="134"/>
    </location>
</feature>
<reference key="1">
    <citation type="journal article" date="1999" name="Nature">
        <title>The complete nucleotide sequence of chromosome 3 of Plasmodium falciparum.</title>
        <authorList>
            <person name="Bowman S."/>
            <person name="Lawson D."/>
            <person name="Basham D."/>
            <person name="Brown D."/>
            <person name="Chillingworth T."/>
            <person name="Churcher C.M."/>
            <person name="Craig A."/>
            <person name="Davies R.M."/>
            <person name="Devlin K."/>
            <person name="Feltwell T."/>
            <person name="Gentles S."/>
            <person name="Gwilliam R."/>
            <person name="Hamlin N."/>
            <person name="Harris D."/>
            <person name="Holroyd S."/>
            <person name="Hornsby T."/>
            <person name="Horrocks P."/>
            <person name="Jagels K."/>
            <person name="Jassal B."/>
            <person name="Kyes S."/>
            <person name="McLean J."/>
            <person name="Moule S."/>
            <person name="Mungall K.L."/>
            <person name="Murphy L."/>
            <person name="Oliver K."/>
            <person name="Quail M.A."/>
            <person name="Rajandream M.A."/>
            <person name="Rutter S."/>
            <person name="Skelton J."/>
            <person name="Squares R."/>
            <person name="Squares S."/>
            <person name="Sulston J.E."/>
            <person name="Whitehead S."/>
            <person name="Woodward J.R."/>
            <person name="Newbold C."/>
            <person name="Barrell B.G."/>
        </authorList>
    </citation>
    <scope>NUCLEOTIDE SEQUENCE [LARGE SCALE GENOMIC DNA]</scope>
    <source>
        <strain>3D7</strain>
    </source>
</reference>
<reference key="2">
    <citation type="journal article" date="2002" name="Nature">
        <title>Genome sequence of the human malaria parasite Plasmodium falciparum.</title>
        <authorList>
            <person name="Gardner M.J."/>
            <person name="Hall N."/>
            <person name="Fung E."/>
            <person name="White O."/>
            <person name="Berriman M."/>
            <person name="Hyman R.W."/>
            <person name="Carlton J.M."/>
            <person name="Pain A."/>
            <person name="Nelson K.E."/>
            <person name="Bowman S."/>
            <person name="Paulsen I.T."/>
            <person name="James K.D."/>
            <person name="Eisen J.A."/>
            <person name="Rutherford K.M."/>
            <person name="Salzberg S.L."/>
            <person name="Craig A."/>
            <person name="Kyes S."/>
            <person name="Chan M.-S."/>
            <person name="Nene V."/>
            <person name="Shallom S.J."/>
            <person name="Suh B."/>
            <person name="Peterson J."/>
            <person name="Angiuoli S."/>
            <person name="Pertea M."/>
            <person name="Allen J."/>
            <person name="Selengut J."/>
            <person name="Haft D."/>
            <person name="Mather M.W."/>
            <person name="Vaidya A.B."/>
            <person name="Martin D.M.A."/>
            <person name="Fairlamb A.H."/>
            <person name="Fraunholz M.J."/>
            <person name="Roos D.S."/>
            <person name="Ralph S.A."/>
            <person name="McFadden G.I."/>
            <person name="Cummings L.M."/>
            <person name="Subramanian G.M."/>
            <person name="Mungall C."/>
            <person name="Venter J.C."/>
            <person name="Carucci D.J."/>
            <person name="Hoffman S.L."/>
            <person name="Newbold C."/>
            <person name="Davis R.W."/>
            <person name="Fraser C.M."/>
            <person name="Barrell B.G."/>
        </authorList>
    </citation>
    <scope>NUCLEOTIDE SEQUENCE [LARGE SCALE GENOMIC DNA]</scope>
    <source>
        <strain>3D7</strain>
    </source>
</reference>
<reference key="3">
    <citation type="journal article" date="2002" name="Nature">
        <title>Sequence of Plasmodium falciparum chromosomes 1, 3-9 and 13.</title>
        <authorList>
            <person name="Hall N."/>
            <person name="Pain A."/>
            <person name="Berriman M."/>
            <person name="Churcher C.M."/>
            <person name="Harris B."/>
            <person name="Harris D."/>
            <person name="Mungall K.L."/>
            <person name="Bowman S."/>
            <person name="Atkin R."/>
            <person name="Baker S."/>
            <person name="Barron A."/>
            <person name="Brooks K."/>
            <person name="Buckee C.O."/>
            <person name="Burrows C."/>
            <person name="Cherevach I."/>
            <person name="Chillingworth C."/>
            <person name="Chillingworth T."/>
            <person name="Christodoulou Z."/>
            <person name="Clark L."/>
            <person name="Clark R."/>
            <person name="Corton C."/>
            <person name="Cronin A."/>
            <person name="Davies R.M."/>
            <person name="Davis P."/>
            <person name="Dear P."/>
            <person name="Dearden F."/>
            <person name="Doggett J."/>
            <person name="Feltwell T."/>
            <person name="Goble A."/>
            <person name="Goodhead I."/>
            <person name="Gwilliam R."/>
            <person name="Hamlin N."/>
            <person name="Hance Z."/>
            <person name="Harper D."/>
            <person name="Hauser H."/>
            <person name="Hornsby T."/>
            <person name="Holroyd S."/>
            <person name="Horrocks P."/>
            <person name="Humphray S."/>
            <person name="Jagels K."/>
            <person name="James K.D."/>
            <person name="Johnson D."/>
            <person name="Kerhornou A."/>
            <person name="Knights A."/>
            <person name="Konfortov B."/>
            <person name="Kyes S."/>
            <person name="Larke N."/>
            <person name="Lawson D."/>
            <person name="Lennard N."/>
            <person name="Line A."/>
            <person name="Maddison M."/>
            <person name="Mclean J."/>
            <person name="Mooney P."/>
            <person name="Moule S."/>
            <person name="Murphy L."/>
            <person name="Oliver K."/>
            <person name="Ormond D."/>
            <person name="Price C."/>
            <person name="Quail M.A."/>
            <person name="Rabbinowitsch E."/>
            <person name="Rajandream M.A."/>
            <person name="Rutter S."/>
            <person name="Rutherford K.M."/>
            <person name="Sanders M."/>
            <person name="Simmonds M."/>
            <person name="Seeger K."/>
            <person name="Sharp S."/>
            <person name="Smith R."/>
            <person name="Squares R."/>
            <person name="Squares S."/>
            <person name="Stevens K."/>
            <person name="Taylor K."/>
            <person name="Tivey A."/>
            <person name="Unwin L."/>
            <person name="Whitehead S."/>
            <person name="Woodward J.R."/>
            <person name="Sulston J.E."/>
            <person name="Craig A."/>
            <person name="Newbold C."/>
            <person name="Barrell B.G."/>
        </authorList>
    </citation>
    <scope>NUCLEOTIDE SEQUENCE [LARGE SCALE GENOMIC DNA]</scope>
    <source>
        <strain>3D7</strain>
    </source>
</reference>
<reference evidence="7 11" key="4">
    <citation type="journal article" date="2014" name="Elife">
        <title>Cryo-EM structure of the Plasmodium falciparum 80S ribosome bound to the anti-protozoan drug emetine.</title>
        <authorList>
            <person name="Wong W."/>
            <person name="Bai X.C."/>
            <person name="Brown A."/>
            <person name="Fernandez I.S."/>
            <person name="Hanssen E."/>
            <person name="Condron M."/>
            <person name="Tan Y.H."/>
            <person name="Baum J."/>
            <person name="Scheres S.H."/>
        </authorList>
    </citation>
    <scope>STRUCTURE BY ELECTRON MICROSCOPY (3.20 ANGSTROMS) IN COMPLEX WITH RIBOSOMAL PROTEINS; RRNA; TRNA AND EMETINE INHIBITOR</scope>
    <scope>FUNCTION</scope>
    <scope>SUBCELLULAR LOCATION</scope>
    <scope>DEVELOPMENTAL STAGE</scope>
</reference>
<reference evidence="8 9 10" key="5">
    <citation type="journal article" date="2015" name="Nucleic Acids Res.">
        <title>Dynamical features of the Plasmodium falciparum ribosome during translation.</title>
        <authorList>
            <person name="Sun M."/>
            <person name="Li W."/>
            <person name="Blomqvist K."/>
            <person name="Das S."/>
            <person name="Hashem Y."/>
            <person name="Dvorin J.D."/>
            <person name="Frank J."/>
        </authorList>
    </citation>
    <scope>STRUCTURE BY ELECTRON MICROSCOPY (4.70 ANGSTROMS) OF 22-135 IN COMPLEX WITH RIBOSOMAL PROTEINS; RRNA AND TRNA</scope>
    <scope>FUNCTION</scope>
    <scope>DEVELOPMENTAL STAGE</scope>
</reference>
<keyword id="KW-0002">3D-structure</keyword>
<keyword id="KW-0963">Cytoplasm</keyword>
<keyword id="KW-1185">Reference proteome</keyword>
<keyword id="KW-0687">Ribonucleoprotein</keyword>
<keyword id="KW-0689">Ribosomal protein</keyword>
<accession>O97249</accession>
<evidence type="ECO:0000269" key="1">
    <source>
    </source>
</evidence>
<evidence type="ECO:0000269" key="2">
    <source>
    </source>
</evidence>
<evidence type="ECO:0000303" key="3">
    <source>
    </source>
</evidence>
<evidence type="ECO:0000305" key="4"/>
<evidence type="ECO:0000305" key="5">
    <source>
    </source>
</evidence>
<evidence type="ECO:0000305" key="6">
    <source>
    </source>
</evidence>
<evidence type="ECO:0007744" key="7">
    <source>
        <dbReference type="PDB" id="3J7A"/>
    </source>
</evidence>
<evidence type="ECO:0007744" key="8">
    <source>
        <dbReference type="PDB" id="3JBN"/>
    </source>
</evidence>
<evidence type="ECO:0007744" key="9">
    <source>
        <dbReference type="PDB" id="3JBO"/>
    </source>
</evidence>
<evidence type="ECO:0007744" key="10">
    <source>
        <dbReference type="PDB" id="3JBP"/>
    </source>
</evidence>
<evidence type="ECO:0007744" key="11">
    <source>
        <dbReference type="PDB" id="6OKK"/>
    </source>
</evidence>
<evidence type="ECO:0007829" key="12">
    <source>
        <dbReference type="PDB" id="3J7A"/>
    </source>
</evidence>
<organism>
    <name type="scientific">Plasmodium falciparum (isolate 3D7)</name>
    <dbReference type="NCBI Taxonomy" id="36329"/>
    <lineage>
        <taxon>Eukaryota</taxon>
        <taxon>Sar</taxon>
        <taxon>Alveolata</taxon>
        <taxon>Apicomplexa</taxon>
        <taxon>Aconoidasida</taxon>
        <taxon>Haemosporida</taxon>
        <taxon>Plasmodiidae</taxon>
        <taxon>Plasmodium</taxon>
        <taxon>Plasmodium (Laverania)</taxon>
    </lineage>
</organism>
<gene>
    <name evidence="4" type="primary">RPS12</name>
    <name evidence="3" type="synonym">eS12</name>
    <name type="ORF">MAL3P2.28</name>
    <name type="ORF">PF3D7_0307100</name>
    <name type="ORF">PFC0295C</name>
</gene>
<protein>
    <recommendedName>
        <fullName evidence="4">Small ribosomal subunit protein eS12</fullName>
    </recommendedName>
    <alternativeName>
        <fullName>40S ribosomal protein S12</fullName>
    </alternativeName>
</protein>
<sequence>MSDVESADNNVVVEEKAVFDNVTAIQKVIKNAHVHDGLKIGIREVIKSIESQEAKVCFLSDVCSEPAYKKLITTLCAEKNIPLFMVQNDSKDLGHWAGLFKLDNEGNARKIIGASSVAVVDFGEDSAEKDFLLSQNQTVTA</sequence>
<name>RS12_PLAF7</name>
<proteinExistence type="evidence at protein level"/>